<proteinExistence type="inferred from homology"/>
<reference key="1">
    <citation type="journal article" date="2008" name="J. Bacteriol.">
        <title>Comparative genome sequence analysis of multidrug-resistant Acinetobacter baumannii.</title>
        <authorList>
            <person name="Adams M.D."/>
            <person name="Goglin K."/>
            <person name="Molyneaux N."/>
            <person name="Hujer K.M."/>
            <person name="Lavender H."/>
            <person name="Jamison J.J."/>
            <person name="MacDonald I.J."/>
            <person name="Martin K.M."/>
            <person name="Russo T."/>
            <person name="Campagnari A.A."/>
            <person name="Hujer A.M."/>
            <person name="Bonomo R.A."/>
            <person name="Gill S.R."/>
        </authorList>
    </citation>
    <scope>NUCLEOTIDE SEQUENCE [LARGE SCALE GENOMIC DNA]</scope>
    <source>
        <strain>AB307-0294</strain>
    </source>
</reference>
<name>RL30_ACIB3</name>
<sequence length="58" mass="6642">MKTIKVTQTKSSSHRLKNHKLCLQGLGLRRIGHTVEVQDTPSNRGMINKVYYMVSVEE</sequence>
<gene>
    <name evidence="1" type="primary">rpmD</name>
    <name type="ordered locus">ABBFA_000450</name>
</gene>
<comment type="subunit">
    <text evidence="1">Part of the 50S ribosomal subunit.</text>
</comment>
<comment type="similarity">
    <text evidence="1">Belongs to the universal ribosomal protein uL30 family.</text>
</comment>
<keyword id="KW-0687">Ribonucleoprotein</keyword>
<keyword id="KW-0689">Ribosomal protein</keyword>
<accession>B7GW20</accession>
<dbReference type="EMBL" id="CP001172">
    <property type="protein sequence ID" value="ACJ57518.1"/>
    <property type="molecule type" value="Genomic_DNA"/>
</dbReference>
<dbReference type="RefSeq" id="WP_000849088.1">
    <property type="nucleotide sequence ID" value="NZ_CP001172.1"/>
</dbReference>
<dbReference type="SMR" id="B7GW20"/>
<dbReference type="GeneID" id="9380834"/>
<dbReference type="HOGENOM" id="CLU_131047_1_4_6"/>
<dbReference type="Proteomes" id="UP000006924">
    <property type="component" value="Chromosome"/>
</dbReference>
<dbReference type="GO" id="GO:0022625">
    <property type="term" value="C:cytosolic large ribosomal subunit"/>
    <property type="evidence" value="ECO:0007669"/>
    <property type="project" value="TreeGrafter"/>
</dbReference>
<dbReference type="GO" id="GO:0003735">
    <property type="term" value="F:structural constituent of ribosome"/>
    <property type="evidence" value="ECO:0007669"/>
    <property type="project" value="InterPro"/>
</dbReference>
<dbReference type="GO" id="GO:0006412">
    <property type="term" value="P:translation"/>
    <property type="evidence" value="ECO:0007669"/>
    <property type="project" value="UniProtKB-UniRule"/>
</dbReference>
<dbReference type="CDD" id="cd01658">
    <property type="entry name" value="Ribosomal_L30"/>
    <property type="match status" value="1"/>
</dbReference>
<dbReference type="FunFam" id="3.30.1390.20:FF:000001">
    <property type="entry name" value="50S ribosomal protein L30"/>
    <property type="match status" value="1"/>
</dbReference>
<dbReference type="Gene3D" id="3.30.1390.20">
    <property type="entry name" value="Ribosomal protein L30, ferredoxin-like fold domain"/>
    <property type="match status" value="1"/>
</dbReference>
<dbReference type="HAMAP" id="MF_01371_B">
    <property type="entry name" value="Ribosomal_uL30_B"/>
    <property type="match status" value="1"/>
</dbReference>
<dbReference type="InterPro" id="IPR036919">
    <property type="entry name" value="Ribo_uL30_ferredoxin-like_sf"/>
</dbReference>
<dbReference type="InterPro" id="IPR005996">
    <property type="entry name" value="Ribosomal_uL30_bac-type"/>
</dbReference>
<dbReference type="InterPro" id="IPR016082">
    <property type="entry name" value="Ribosomal_uL30_ferredoxin-like"/>
</dbReference>
<dbReference type="NCBIfam" id="TIGR01308">
    <property type="entry name" value="rpmD_bact"/>
    <property type="match status" value="1"/>
</dbReference>
<dbReference type="PANTHER" id="PTHR15892:SF2">
    <property type="entry name" value="LARGE RIBOSOMAL SUBUNIT PROTEIN UL30M"/>
    <property type="match status" value="1"/>
</dbReference>
<dbReference type="PANTHER" id="PTHR15892">
    <property type="entry name" value="MITOCHONDRIAL RIBOSOMAL PROTEIN L30"/>
    <property type="match status" value="1"/>
</dbReference>
<dbReference type="Pfam" id="PF00327">
    <property type="entry name" value="Ribosomal_L30"/>
    <property type="match status" value="1"/>
</dbReference>
<dbReference type="PIRSF" id="PIRSF002211">
    <property type="entry name" value="Ribosomal_L30_bac-type"/>
    <property type="match status" value="1"/>
</dbReference>
<dbReference type="SUPFAM" id="SSF55129">
    <property type="entry name" value="Ribosomal protein L30p/L7e"/>
    <property type="match status" value="1"/>
</dbReference>
<protein>
    <recommendedName>
        <fullName evidence="1">Large ribosomal subunit protein uL30</fullName>
    </recommendedName>
    <alternativeName>
        <fullName evidence="2">50S ribosomal protein L30</fullName>
    </alternativeName>
</protein>
<evidence type="ECO:0000255" key="1">
    <source>
        <dbReference type="HAMAP-Rule" id="MF_01371"/>
    </source>
</evidence>
<evidence type="ECO:0000305" key="2"/>
<feature type="chain" id="PRO_1000144635" description="Large ribosomal subunit protein uL30">
    <location>
        <begin position="1"/>
        <end position="58"/>
    </location>
</feature>
<organism>
    <name type="scientific">Acinetobacter baumannii (strain AB307-0294)</name>
    <dbReference type="NCBI Taxonomy" id="557600"/>
    <lineage>
        <taxon>Bacteria</taxon>
        <taxon>Pseudomonadati</taxon>
        <taxon>Pseudomonadota</taxon>
        <taxon>Gammaproteobacteria</taxon>
        <taxon>Moraxellales</taxon>
        <taxon>Moraxellaceae</taxon>
        <taxon>Acinetobacter</taxon>
        <taxon>Acinetobacter calcoaceticus/baumannii complex</taxon>
    </lineage>
</organism>